<sequence length="62" mass="7085">MKIHKCSFCGADIPPGYGIMYVRSDGTVQRFCSRKCFVSAVKYGRNPRKLAWVRKKKAKTSK</sequence>
<evidence type="ECO:0000255" key="1">
    <source>
        <dbReference type="HAMAP-Rule" id="MF_00773"/>
    </source>
</evidence>
<evidence type="ECO:0000305" key="2"/>
<feature type="chain" id="PRO_1000017359" description="Large ribosomal subunit protein eL24">
    <location>
        <begin position="1"/>
        <end position="62"/>
    </location>
</feature>
<feature type="zinc finger region" description="C4-type" evidence="1">
    <location>
        <begin position="6"/>
        <end position="36"/>
    </location>
</feature>
<feature type="binding site" evidence="1">
    <location>
        <position position="6"/>
    </location>
    <ligand>
        <name>Zn(2+)</name>
        <dbReference type="ChEBI" id="CHEBI:29105"/>
    </ligand>
</feature>
<feature type="binding site" evidence="1">
    <location>
        <position position="9"/>
    </location>
    <ligand>
        <name>Zn(2+)</name>
        <dbReference type="ChEBI" id="CHEBI:29105"/>
    </ligand>
</feature>
<feature type="binding site" evidence="1">
    <location>
        <position position="32"/>
    </location>
    <ligand>
        <name>Zn(2+)</name>
        <dbReference type="ChEBI" id="CHEBI:29105"/>
    </ligand>
</feature>
<feature type="binding site" evidence="1">
    <location>
        <position position="36"/>
    </location>
    <ligand>
        <name>Zn(2+)</name>
        <dbReference type="ChEBI" id="CHEBI:29105"/>
    </ligand>
</feature>
<accession>A3MTA8</accession>
<name>RL24E_PYRCJ</name>
<reference key="1">
    <citation type="submission" date="2007-02" db="EMBL/GenBank/DDBJ databases">
        <title>Complete sequence of Pyrobaculum calidifontis JCM 11548.</title>
        <authorList>
            <consortium name="US DOE Joint Genome Institute"/>
            <person name="Copeland A."/>
            <person name="Lucas S."/>
            <person name="Lapidus A."/>
            <person name="Barry K."/>
            <person name="Glavina del Rio T."/>
            <person name="Dalin E."/>
            <person name="Tice H."/>
            <person name="Pitluck S."/>
            <person name="Chain P."/>
            <person name="Malfatti S."/>
            <person name="Shin M."/>
            <person name="Vergez L."/>
            <person name="Schmutz J."/>
            <person name="Larimer F."/>
            <person name="Land M."/>
            <person name="Hauser L."/>
            <person name="Kyrpides N."/>
            <person name="Mikhailova N."/>
            <person name="Cozen A.E."/>
            <person name="Fitz-Gibbon S.T."/>
            <person name="House C.H."/>
            <person name="Saltikov C."/>
            <person name="Lowe T.M."/>
            <person name="Richardson P."/>
        </authorList>
    </citation>
    <scope>NUCLEOTIDE SEQUENCE [LARGE SCALE GENOMIC DNA]</scope>
    <source>
        <strain>DSM 21063 / JCM 11548 / VA1</strain>
    </source>
</reference>
<protein>
    <recommendedName>
        <fullName evidence="1">Large ribosomal subunit protein eL24</fullName>
    </recommendedName>
    <alternativeName>
        <fullName evidence="2">50S ribosomal protein L24e</fullName>
    </alternativeName>
</protein>
<keyword id="KW-0002">3D-structure</keyword>
<keyword id="KW-0479">Metal-binding</keyword>
<keyword id="KW-0687">Ribonucleoprotein</keyword>
<keyword id="KW-0689">Ribosomal protein</keyword>
<keyword id="KW-0694">RNA-binding</keyword>
<keyword id="KW-0699">rRNA-binding</keyword>
<keyword id="KW-0862">Zinc</keyword>
<keyword id="KW-0863">Zinc-finger</keyword>
<gene>
    <name evidence="1" type="primary">rpl24e</name>
    <name type="ordered locus">Pcal_0442</name>
</gene>
<organism>
    <name type="scientific">Pyrobaculum calidifontis (strain DSM 21063 / JCM 11548 / VA1)</name>
    <dbReference type="NCBI Taxonomy" id="410359"/>
    <lineage>
        <taxon>Archaea</taxon>
        <taxon>Thermoproteota</taxon>
        <taxon>Thermoprotei</taxon>
        <taxon>Thermoproteales</taxon>
        <taxon>Thermoproteaceae</taxon>
        <taxon>Pyrobaculum</taxon>
    </lineage>
</organism>
<dbReference type="EMBL" id="CP000561">
    <property type="protein sequence ID" value="ABO07875.1"/>
    <property type="molecule type" value="Genomic_DNA"/>
</dbReference>
<dbReference type="RefSeq" id="WP_011849133.1">
    <property type="nucleotide sequence ID" value="NC_009073.1"/>
</dbReference>
<dbReference type="PDB" id="9E6Q">
    <property type="method" value="EM"/>
    <property type="resolution" value="1.95 A"/>
    <property type="chains" value="AW=1-62"/>
</dbReference>
<dbReference type="PDB" id="9E71">
    <property type="method" value="EM"/>
    <property type="resolution" value="2.36 A"/>
    <property type="chains" value="AW=1-62"/>
</dbReference>
<dbReference type="PDB" id="9E7F">
    <property type="method" value="EM"/>
    <property type="resolution" value="2.53 A"/>
    <property type="chains" value="AW=1-62"/>
</dbReference>
<dbReference type="PDBsum" id="9E6Q"/>
<dbReference type="PDBsum" id="9E71"/>
<dbReference type="PDBsum" id="9E7F"/>
<dbReference type="EMDB" id="EMD-47578"/>
<dbReference type="EMDB" id="EMD-47628"/>
<dbReference type="EMDB" id="EMD-47668"/>
<dbReference type="SMR" id="A3MTA8"/>
<dbReference type="STRING" id="410359.Pcal_0442"/>
<dbReference type="GeneID" id="4908752"/>
<dbReference type="KEGG" id="pcl:Pcal_0442"/>
<dbReference type="eggNOG" id="arCOG01950">
    <property type="taxonomic scope" value="Archaea"/>
</dbReference>
<dbReference type="HOGENOM" id="CLU_190191_0_0_2"/>
<dbReference type="OrthoDB" id="55506at2157"/>
<dbReference type="Proteomes" id="UP000001431">
    <property type="component" value="Chromosome"/>
</dbReference>
<dbReference type="GO" id="GO:1990904">
    <property type="term" value="C:ribonucleoprotein complex"/>
    <property type="evidence" value="ECO:0007669"/>
    <property type="project" value="UniProtKB-KW"/>
</dbReference>
<dbReference type="GO" id="GO:0005840">
    <property type="term" value="C:ribosome"/>
    <property type="evidence" value="ECO:0007669"/>
    <property type="project" value="UniProtKB-KW"/>
</dbReference>
<dbReference type="GO" id="GO:0019843">
    <property type="term" value="F:rRNA binding"/>
    <property type="evidence" value="ECO:0007669"/>
    <property type="project" value="UniProtKB-UniRule"/>
</dbReference>
<dbReference type="GO" id="GO:0003735">
    <property type="term" value="F:structural constituent of ribosome"/>
    <property type="evidence" value="ECO:0007669"/>
    <property type="project" value="InterPro"/>
</dbReference>
<dbReference type="GO" id="GO:0008270">
    <property type="term" value="F:zinc ion binding"/>
    <property type="evidence" value="ECO:0007669"/>
    <property type="project" value="UniProtKB-UniRule"/>
</dbReference>
<dbReference type="GO" id="GO:0006412">
    <property type="term" value="P:translation"/>
    <property type="evidence" value="ECO:0007669"/>
    <property type="project" value="UniProtKB-UniRule"/>
</dbReference>
<dbReference type="CDD" id="cd00472">
    <property type="entry name" value="Ribosomal_L24e_L24"/>
    <property type="match status" value="1"/>
</dbReference>
<dbReference type="Gene3D" id="2.30.170.20">
    <property type="entry name" value="Ribosomal protein L24e"/>
    <property type="match status" value="1"/>
</dbReference>
<dbReference type="HAMAP" id="MF_00773">
    <property type="entry name" value="Ribosomal_eL24"/>
    <property type="match status" value="1"/>
</dbReference>
<dbReference type="InterPro" id="IPR038630">
    <property type="entry name" value="L24e/L24_sf"/>
</dbReference>
<dbReference type="InterPro" id="IPR056366">
    <property type="entry name" value="Ribosomal_eL24"/>
</dbReference>
<dbReference type="InterPro" id="IPR055345">
    <property type="entry name" value="Ribosomal_eL24-rel_arc"/>
</dbReference>
<dbReference type="InterPro" id="IPR000988">
    <property type="entry name" value="Ribosomal_eL24-rel_N"/>
</dbReference>
<dbReference type="InterPro" id="IPR023442">
    <property type="entry name" value="Ribosomal_eL24_CS"/>
</dbReference>
<dbReference type="InterPro" id="IPR011017">
    <property type="entry name" value="TRASH_dom"/>
</dbReference>
<dbReference type="NCBIfam" id="NF034186">
    <property type="entry name" value="PRK14891.1-1"/>
    <property type="match status" value="1"/>
</dbReference>
<dbReference type="PANTHER" id="PTHR10792">
    <property type="entry name" value="60S RIBOSOMAL PROTEIN L24"/>
    <property type="match status" value="1"/>
</dbReference>
<dbReference type="PANTHER" id="PTHR10792:SF1">
    <property type="entry name" value="RIBOSOMAL PROTEIN L24"/>
    <property type="match status" value="1"/>
</dbReference>
<dbReference type="Pfam" id="PF01246">
    <property type="entry name" value="Ribosomal_L24e"/>
    <property type="match status" value="1"/>
</dbReference>
<dbReference type="SMART" id="SM00746">
    <property type="entry name" value="TRASH"/>
    <property type="match status" value="1"/>
</dbReference>
<dbReference type="SUPFAM" id="SSF57716">
    <property type="entry name" value="Glucocorticoid receptor-like (DNA-binding domain)"/>
    <property type="match status" value="1"/>
</dbReference>
<dbReference type="PROSITE" id="PS01073">
    <property type="entry name" value="RIBOSOMAL_L24E"/>
    <property type="match status" value="1"/>
</dbReference>
<proteinExistence type="evidence at protein level"/>
<comment type="function">
    <text evidence="1">Binds to the 23S rRNA.</text>
</comment>
<comment type="cofactor">
    <cofactor evidence="1">
        <name>Zn(2+)</name>
        <dbReference type="ChEBI" id="CHEBI:29105"/>
    </cofactor>
    <text evidence="1">Binds 1 zinc ion per subunit.</text>
</comment>
<comment type="subunit">
    <text evidence="1">Part of the 50S ribosomal subunit. Forms a cluster with proteins L3 and L14.</text>
</comment>
<comment type="similarity">
    <text evidence="1">Belongs to the eukaryotic ribosomal protein eL24 family.</text>
</comment>